<gene>
    <name evidence="1" type="primary">queC</name>
    <name type="ordered locus">A1E_04610</name>
</gene>
<protein>
    <recommendedName>
        <fullName evidence="1">7-cyano-7-deazaguanine synthase</fullName>
        <ecNumber evidence="1">6.3.4.20</ecNumber>
    </recommendedName>
    <alternativeName>
        <fullName evidence="1">7-cyano-7-carbaguanine synthase</fullName>
    </alternativeName>
    <alternativeName>
        <fullName evidence="1">PreQ(0) synthase</fullName>
    </alternativeName>
    <alternativeName>
        <fullName evidence="1">Queuosine biosynthesis protein QueC</fullName>
    </alternativeName>
</protein>
<proteinExistence type="inferred from homology"/>
<sequence>MKKLVNLVSGGADSATVLAIAQKMGYEIYAMSFNYGQRNNAELRKVRELVKEYNVKQHKIVNIDLRAFSGSALTDNNISVPHYHDVNELPDDVPVTYVPARNTIFLSYALGFAEVIGAKDIFIGVHTSDSANYPDCRPEYIKSFEEMANLATNMGVQGKKITIHTPLIDMTKEQIIRTGLELGVDYKNTISCYEPTEDDLSCGTCLACMIRLDAFKKNDIQDPIKYV</sequence>
<accession>A8EZR4</accession>
<organism>
    <name type="scientific">Rickettsia canadensis (strain McKiel)</name>
    <dbReference type="NCBI Taxonomy" id="293613"/>
    <lineage>
        <taxon>Bacteria</taxon>
        <taxon>Pseudomonadati</taxon>
        <taxon>Pseudomonadota</taxon>
        <taxon>Alphaproteobacteria</taxon>
        <taxon>Rickettsiales</taxon>
        <taxon>Rickettsiaceae</taxon>
        <taxon>Rickettsieae</taxon>
        <taxon>Rickettsia</taxon>
        <taxon>belli group</taxon>
    </lineage>
</organism>
<comment type="function">
    <text evidence="1">Catalyzes the ATP-dependent conversion of 7-carboxy-7-deazaguanine (CDG) to 7-cyano-7-deazaguanine (preQ(0)).</text>
</comment>
<comment type="catalytic activity">
    <reaction evidence="1">
        <text>7-carboxy-7-deazaguanine + NH4(+) + ATP = 7-cyano-7-deazaguanine + ADP + phosphate + H2O + H(+)</text>
        <dbReference type="Rhea" id="RHEA:27982"/>
        <dbReference type="ChEBI" id="CHEBI:15377"/>
        <dbReference type="ChEBI" id="CHEBI:15378"/>
        <dbReference type="ChEBI" id="CHEBI:28938"/>
        <dbReference type="ChEBI" id="CHEBI:30616"/>
        <dbReference type="ChEBI" id="CHEBI:43474"/>
        <dbReference type="ChEBI" id="CHEBI:45075"/>
        <dbReference type="ChEBI" id="CHEBI:61036"/>
        <dbReference type="ChEBI" id="CHEBI:456216"/>
        <dbReference type="EC" id="6.3.4.20"/>
    </reaction>
</comment>
<comment type="cofactor">
    <cofactor evidence="1">
        <name>Zn(2+)</name>
        <dbReference type="ChEBI" id="CHEBI:29105"/>
    </cofactor>
    <text evidence="1">Binds 1 zinc ion per subunit.</text>
</comment>
<comment type="pathway">
    <text evidence="1">Purine metabolism; 7-cyano-7-deazaguanine biosynthesis.</text>
</comment>
<comment type="similarity">
    <text evidence="1">Belongs to the QueC family.</text>
</comment>
<keyword id="KW-0067">ATP-binding</keyword>
<keyword id="KW-0436">Ligase</keyword>
<keyword id="KW-0479">Metal-binding</keyword>
<keyword id="KW-0547">Nucleotide-binding</keyword>
<keyword id="KW-0671">Queuosine biosynthesis</keyword>
<keyword id="KW-0862">Zinc</keyword>
<reference key="1">
    <citation type="submission" date="2007-09" db="EMBL/GenBank/DDBJ databases">
        <title>Complete genome sequence of Rickettsia canadensis.</title>
        <authorList>
            <person name="Madan A."/>
            <person name="Fahey J."/>
            <person name="Helton E."/>
            <person name="Ketteman M."/>
            <person name="Madan A."/>
            <person name="Rodrigues S."/>
            <person name="Sanchez A."/>
            <person name="Whiting M."/>
            <person name="Dasch G."/>
            <person name="Eremeeva M."/>
        </authorList>
    </citation>
    <scope>NUCLEOTIDE SEQUENCE [LARGE SCALE GENOMIC DNA]</scope>
    <source>
        <strain>McKiel</strain>
    </source>
</reference>
<feature type="chain" id="PRO_1000069796" description="7-cyano-7-deazaguanine synthase">
    <location>
        <begin position="1"/>
        <end position="227"/>
    </location>
</feature>
<feature type="binding site" evidence="1">
    <location>
        <begin position="8"/>
        <end position="18"/>
    </location>
    <ligand>
        <name>ATP</name>
        <dbReference type="ChEBI" id="CHEBI:30616"/>
    </ligand>
</feature>
<feature type="binding site" evidence="1">
    <location>
        <position position="192"/>
    </location>
    <ligand>
        <name>Zn(2+)</name>
        <dbReference type="ChEBI" id="CHEBI:29105"/>
    </ligand>
</feature>
<feature type="binding site" evidence="1">
    <location>
        <position position="202"/>
    </location>
    <ligand>
        <name>Zn(2+)</name>
        <dbReference type="ChEBI" id="CHEBI:29105"/>
    </ligand>
</feature>
<feature type="binding site" evidence="1">
    <location>
        <position position="205"/>
    </location>
    <ligand>
        <name>Zn(2+)</name>
        <dbReference type="ChEBI" id="CHEBI:29105"/>
    </ligand>
</feature>
<feature type="binding site" evidence="1">
    <location>
        <position position="208"/>
    </location>
    <ligand>
        <name>Zn(2+)</name>
        <dbReference type="ChEBI" id="CHEBI:29105"/>
    </ligand>
</feature>
<evidence type="ECO:0000255" key="1">
    <source>
        <dbReference type="HAMAP-Rule" id="MF_01633"/>
    </source>
</evidence>
<dbReference type="EC" id="6.3.4.20" evidence="1"/>
<dbReference type="EMBL" id="CP000409">
    <property type="protein sequence ID" value="ABV73847.1"/>
    <property type="molecule type" value="Genomic_DNA"/>
</dbReference>
<dbReference type="RefSeq" id="WP_012149042.1">
    <property type="nucleotide sequence ID" value="NC_009879.1"/>
</dbReference>
<dbReference type="SMR" id="A8EZR4"/>
<dbReference type="STRING" id="293613.A1E_04610"/>
<dbReference type="KEGG" id="rcm:A1E_04610"/>
<dbReference type="eggNOG" id="COG0603">
    <property type="taxonomic scope" value="Bacteria"/>
</dbReference>
<dbReference type="HOGENOM" id="CLU_081854_1_0_5"/>
<dbReference type="UniPathway" id="UPA00391"/>
<dbReference type="Proteomes" id="UP000007056">
    <property type="component" value="Chromosome"/>
</dbReference>
<dbReference type="GO" id="GO:0005524">
    <property type="term" value="F:ATP binding"/>
    <property type="evidence" value="ECO:0007669"/>
    <property type="project" value="UniProtKB-UniRule"/>
</dbReference>
<dbReference type="GO" id="GO:0016879">
    <property type="term" value="F:ligase activity, forming carbon-nitrogen bonds"/>
    <property type="evidence" value="ECO:0007669"/>
    <property type="project" value="UniProtKB-UniRule"/>
</dbReference>
<dbReference type="GO" id="GO:0008270">
    <property type="term" value="F:zinc ion binding"/>
    <property type="evidence" value="ECO:0007669"/>
    <property type="project" value="UniProtKB-UniRule"/>
</dbReference>
<dbReference type="GO" id="GO:0008616">
    <property type="term" value="P:queuosine biosynthetic process"/>
    <property type="evidence" value="ECO:0007669"/>
    <property type="project" value="UniProtKB-UniRule"/>
</dbReference>
<dbReference type="CDD" id="cd01995">
    <property type="entry name" value="QueC-like"/>
    <property type="match status" value="1"/>
</dbReference>
<dbReference type="Gene3D" id="3.40.50.620">
    <property type="entry name" value="HUPs"/>
    <property type="match status" value="1"/>
</dbReference>
<dbReference type="HAMAP" id="MF_01633">
    <property type="entry name" value="QueC"/>
    <property type="match status" value="1"/>
</dbReference>
<dbReference type="InterPro" id="IPR018317">
    <property type="entry name" value="QueC"/>
</dbReference>
<dbReference type="InterPro" id="IPR014729">
    <property type="entry name" value="Rossmann-like_a/b/a_fold"/>
</dbReference>
<dbReference type="NCBIfam" id="TIGR00364">
    <property type="entry name" value="7-cyano-7-deazaguanine synthase QueC"/>
    <property type="match status" value="1"/>
</dbReference>
<dbReference type="PANTHER" id="PTHR42914">
    <property type="entry name" value="7-CYANO-7-DEAZAGUANINE SYNTHASE"/>
    <property type="match status" value="1"/>
</dbReference>
<dbReference type="PANTHER" id="PTHR42914:SF1">
    <property type="entry name" value="7-CYANO-7-DEAZAGUANINE SYNTHASE"/>
    <property type="match status" value="1"/>
</dbReference>
<dbReference type="Pfam" id="PF06508">
    <property type="entry name" value="QueC"/>
    <property type="match status" value="1"/>
</dbReference>
<dbReference type="PIRSF" id="PIRSF006293">
    <property type="entry name" value="ExsB"/>
    <property type="match status" value="1"/>
</dbReference>
<dbReference type="SUPFAM" id="SSF52402">
    <property type="entry name" value="Adenine nucleotide alpha hydrolases-like"/>
    <property type="match status" value="1"/>
</dbReference>
<name>QUEC_RICCK</name>